<protein>
    <recommendedName>
        <fullName evidence="1">Aspartate--tRNA(Asp/Asn) ligase</fullName>
        <ecNumber evidence="1">6.1.1.23</ecNumber>
    </recommendedName>
    <alternativeName>
        <fullName evidence="1">Aspartyl-tRNA synthetase</fullName>
        <shortName evidence="1">AspRS</shortName>
    </alternativeName>
    <alternativeName>
        <fullName evidence="1">Non-discriminating aspartyl-tRNA synthetase</fullName>
        <shortName evidence="1">ND-AspRS</shortName>
    </alternativeName>
</protein>
<feature type="chain" id="PRO_1000006686" description="Aspartate--tRNA(Asp/Asn) ligase">
    <location>
        <begin position="1"/>
        <end position="599"/>
    </location>
</feature>
<feature type="region of interest" description="Aspartate" evidence="1">
    <location>
        <begin position="196"/>
        <end position="199"/>
    </location>
</feature>
<feature type="binding site" evidence="1">
    <location>
        <position position="172"/>
    </location>
    <ligand>
        <name>L-aspartate</name>
        <dbReference type="ChEBI" id="CHEBI:29991"/>
    </ligand>
</feature>
<feature type="binding site" evidence="1">
    <location>
        <begin position="218"/>
        <end position="220"/>
    </location>
    <ligand>
        <name>ATP</name>
        <dbReference type="ChEBI" id="CHEBI:30616"/>
    </ligand>
</feature>
<feature type="binding site" evidence="1">
    <location>
        <position position="218"/>
    </location>
    <ligand>
        <name>L-aspartate</name>
        <dbReference type="ChEBI" id="CHEBI:29991"/>
    </ligand>
</feature>
<feature type="binding site" evidence="1">
    <location>
        <position position="227"/>
    </location>
    <ligand>
        <name>ATP</name>
        <dbReference type="ChEBI" id="CHEBI:30616"/>
    </ligand>
</feature>
<feature type="binding site" evidence="1">
    <location>
        <position position="455"/>
    </location>
    <ligand>
        <name>L-aspartate</name>
        <dbReference type="ChEBI" id="CHEBI:29991"/>
    </ligand>
</feature>
<feature type="binding site" evidence="1">
    <location>
        <position position="489"/>
    </location>
    <ligand>
        <name>ATP</name>
        <dbReference type="ChEBI" id="CHEBI:30616"/>
    </ligand>
</feature>
<feature type="binding site" evidence="1">
    <location>
        <position position="496"/>
    </location>
    <ligand>
        <name>L-aspartate</name>
        <dbReference type="ChEBI" id="CHEBI:29991"/>
    </ligand>
</feature>
<feature type="binding site" evidence="1">
    <location>
        <begin position="541"/>
        <end position="544"/>
    </location>
    <ligand>
        <name>ATP</name>
        <dbReference type="ChEBI" id="CHEBI:30616"/>
    </ligand>
</feature>
<feature type="site" description="Important for tRNA non-discrimination" evidence="1">
    <location>
        <position position="30"/>
    </location>
</feature>
<feature type="site" description="Important for tRNA non-discrimination" evidence="1">
    <location>
        <position position="81"/>
    </location>
</feature>
<organism>
    <name type="scientific">Herminiimonas arsenicoxydans</name>
    <dbReference type="NCBI Taxonomy" id="204773"/>
    <lineage>
        <taxon>Bacteria</taxon>
        <taxon>Pseudomonadati</taxon>
        <taxon>Pseudomonadota</taxon>
        <taxon>Betaproteobacteria</taxon>
        <taxon>Burkholderiales</taxon>
        <taxon>Oxalobacteraceae</taxon>
        <taxon>Herminiimonas</taxon>
    </lineage>
</organism>
<reference key="1">
    <citation type="journal article" date="2007" name="PLoS Genet.">
        <title>A tale of two oxidation states: bacterial colonization of arsenic-rich environments.</title>
        <authorList>
            <person name="Muller D."/>
            <person name="Medigue C."/>
            <person name="Koechler S."/>
            <person name="Barbe V."/>
            <person name="Barakat M."/>
            <person name="Talla E."/>
            <person name="Bonnefoy V."/>
            <person name="Krin E."/>
            <person name="Arsene-Ploetze F."/>
            <person name="Carapito C."/>
            <person name="Chandler M."/>
            <person name="Cournoyer B."/>
            <person name="Cruveiller S."/>
            <person name="Dossat C."/>
            <person name="Duval S."/>
            <person name="Heymann M."/>
            <person name="Leize E."/>
            <person name="Lieutaud A."/>
            <person name="Lievremont D."/>
            <person name="Makita Y."/>
            <person name="Mangenot S."/>
            <person name="Nitschke W."/>
            <person name="Ortet P."/>
            <person name="Perdrial N."/>
            <person name="Schoepp B."/>
            <person name="Siguier P."/>
            <person name="Simeonova D.D."/>
            <person name="Rouy Z."/>
            <person name="Segurens B."/>
            <person name="Turlin E."/>
            <person name="Vallenet D."/>
            <person name="van Dorsselaer A."/>
            <person name="Weiss S."/>
            <person name="Weissenbach J."/>
            <person name="Lett M.-C."/>
            <person name="Danchin A."/>
            <person name="Bertin P.N."/>
        </authorList>
    </citation>
    <scope>NUCLEOTIDE SEQUENCE [LARGE SCALE GENOMIC DNA]</scope>
    <source>
        <strain>ULPAs1</strain>
    </source>
</reference>
<dbReference type="EC" id="6.1.1.23" evidence="1"/>
<dbReference type="EMBL" id="CU207211">
    <property type="protein sequence ID" value="CAL62958.1"/>
    <property type="molecule type" value="Genomic_DNA"/>
</dbReference>
<dbReference type="SMR" id="A4G8X1"/>
<dbReference type="STRING" id="204773.HEAR2844"/>
<dbReference type="KEGG" id="har:HEAR2844"/>
<dbReference type="eggNOG" id="COG0173">
    <property type="taxonomic scope" value="Bacteria"/>
</dbReference>
<dbReference type="HOGENOM" id="CLU_014330_3_2_4"/>
<dbReference type="Proteomes" id="UP000006697">
    <property type="component" value="Chromosome"/>
</dbReference>
<dbReference type="GO" id="GO:0005737">
    <property type="term" value="C:cytoplasm"/>
    <property type="evidence" value="ECO:0007669"/>
    <property type="project" value="UniProtKB-SubCell"/>
</dbReference>
<dbReference type="GO" id="GO:0004815">
    <property type="term" value="F:aspartate-tRNA ligase activity"/>
    <property type="evidence" value="ECO:0007669"/>
    <property type="project" value="UniProtKB-UniRule"/>
</dbReference>
<dbReference type="GO" id="GO:0050560">
    <property type="term" value="F:aspartate-tRNA(Asn) ligase activity"/>
    <property type="evidence" value="ECO:0007669"/>
    <property type="project" value="UniProtKB-EC"/>
</dbReference>
<dbReference type="GO" id="GO:0005524">
    <property type="term" value="F:ATP binding"/>
    <property type="evidence" value="ECO:0007669"/>
    <property type="project" value="UniProtKB-UniRule"/>
</dbReference>
<dbReference type="GO" id="GO:0003676">
    <property type="term" value="F:nucleic acid binding"/>
    <property type="evidence" value="ECO:0007669"/>
    <property type="project" value="InterPro"/>
</dbReference>
<dbReference type="GO" id="GO:0006422">
    <property type="term" value="P:aspartyl-tRNA aminoacylation"/>
    <property type="evidence" value="ECO:0007669"/>
    <property type="project" value="UniProtKB-UniRule"/>
</dbReference>
<dbReference type="CDD" id="cd00777">
    <property type="entry name" value="AspRS_core"/>
    <property type="match status" value="1"/>
</dbReference>
<dbReference type="CDD" id="cd04317">
    <property type="entry name" value="EcAspRS_like_N"/>
    <property type="match status" value="1"/>
</dbReference>
<dbReference type="Gene3D" id="3.30.930.10">
    <property type="entry name" value="Bira Bifunctional Protein, Domain 2"/>
    <property type="match status" value="1"/>
</dbReference>
<dbReference type="Gene3D" id="3.30.1360.30">
    <property type="entry name" value="GAD-like domain"/>
    <property type="match status" value="1"/>
</dbReference>
<dbReference type="Gene3D" id="2.40.50.140">
    <property type="entry name" value="Nucleic acid-binding proteins"/>
    <property type="match status" value="1"/>
</dbReference>
<dbReference type="HAMAP" id="MF_00044">
    <property type="entry name" value="Asp_tRNA_synth_type1"/>
    <property type="match status" value="1"/>
</dbReference>
<dbReference type="InterPro" id="IPR004364">
    <property type="entry name" value="Aa-tRNA-synt_II"/>
</dbReference>
<dbReference type="InterPro" id="IPR006195">
    <property type="entry name" value="aa-tRNA-synth_II"/>
</dbReference>
<dbReference type="InterPro" id="IPR045864">
    <property type="entry name" value="aa-tRNA-synth_II/BPL/LPL"/>
</dbReference>
<dbReference type="InterPro" id="IPR004524">
    <property type="entry name" value="Asp-tRNA-ligase_1"/>
</dbReference>
<dbReference type="InterPro" id="IPR047089">
    <property type="entry name" value="Asp-tRNA-ligase_1_N"/>
</dbReference>
<dbReference type="InterPro" id="IPR002312">
    <property type="entry name" value="Asp/Asn-tRNA-synth_IIb"/>
</dbReference>
<dbReference type="InterPro" id="IPR047090">
    <property type="entry name" value="AspRS_core"/>
</dbReference>
<dbReference type="InterPro" id="IPR004115">
    <property type="entry name" value="GAD-like_sf"/>
</dbReference>
<dbReference type="InterPro" id="IPR029351">
    <property type="entry name" value="GAD_dom"/>
</dbReference>
<dbReference type="InterPro" id="IPR012340">
    <property type="entry name" value="NA-bd_OB-fold"/>
</dbReference>
<dbReference type="InterPro" id="IPR004365">
    <property type="entry name" value="NA-bd_OB_tRNA"/>
</dbReference>
<dbReference type="NCBIfam" id="TIGR00459">
    <property type="entry name" value="aspS_bact"/>
    <property type="match status" value="1"/>
</dbReference>
<dbReference type="NCBIfam" id="NF001750">
    <property type="entry name" value="PRK00476.1"/>
    <property type="match status" value="1"/>
</dbReference>
<dbReference type="PANTHER" id="PTHR22594:SF5">
    <property type="entry name" value="ASPARTATE--TRNA LIGASE, MITOCHONDRIAL"/>
    <property type="match status" value="1"/>
</dbReference>
<dbReference type="PANTHER" id="PTHR22594">
    <property type="entry name" value="ASPARTYL/LYSYL-TRNA SYNTHETASE"/>
    <property type="match status" value="1"/>
</dbReference>
<dbReference type="Pfam" id="PF02938">
    <property type="entry name" value="GAD"/>
    <property type="match status" value="1"/>
</dbReference>
<dbReference type="Pfam" id="PF00152">
    <property type="entry name" value="tRNA-synt_2"/>
    <property type="match status" value="1"/>
</dbReference>
<dbReference type="Pfam" id="PF01336">
    <property type="entry name" value="tRNA_anti-codon"/>
    <property type="match status" value="1"/>
</dbReference>
<dbReference type="PRINTS" id="PR01042">
    <property type="entry name" value="TRNASYNTHASP"/>
</dbReference>
<dbReference type="SUPFAM" id="SSF55681">
    <property type="entry name" value="Class II aaRS and biotin synthetases"/>
    <property type="match status" value="1"/>
</dbReference>
<dbReference type="SUPFAM" id="SSF55261">
    <property type="entry name" value="GAD domain-like"/>
    <property type="match status" value="1"/>
</dbReference>
<dbReference type="SUPFAM" id="SSF50249">
    <property type="entry name" value="Nucleic acid-binding proteins"/>
    <property type="match status" value="1"/>
</dbReference>
<dbReference type="PROSITE" id="PS50862">
    <property type="entry name" value="AA_TRNA_LIGASE_II"/>
    <property type="match status" value="1"/>
</dbReference>
<name>SYDND_HERAR</name>
<evidence type="ECO:0000255" key="1">
    <source>
        <dbReference type="HAMAP-Rule" id="MF_00044"/>
    </source>
</evidence>
<accession>A4G8X1</accession>
<sequence length="599" mass="67553">MRTQYCGLTSEALLDQTVSLCGWVHRRRDHGGVIFIDLRDREGLVQVVCDPDRVDVFKAAEAVRNEFCLRITGIVRHRPEGTTNSNLTSGKIEVLAHELEVLNPSVTPPFQLDDDNLSETTRLTHRVLDLRRPQMQNNLRLRYKVTMEVRKFLDAQGFIDIETPMLTKSTPEGARDYLVPSRVNAGHFFALPQSPQLFKQLLMVANFDRYYQITKCFRDEDLRADRQPEFTQIDCETSFMNEQEIRDLFEGMIRLVFKNCLNVELPNPFPVMDYATAMGMYGSDKPDMRVKLEFTDLTSIMKDVEFKVFSGAANMENGRVVGLRVPGGGAMPRSEIDAYTQFVAIYGAKGLAYIKVNEKAKGRDGLQSPIVKNIHDEALAKIIEATGAQDGDLIFFGADKAKVVNDAIGALRVKVGHSDFGKKNGLFDDEWRPLWVVDFPMFEYDEDSQRWSATHHPFTAPKDGHEDLMETNPGKCLSKAYDMVLNGWELGGGSVRIHRAEVQSKVFRALKISAEEAQLKFGFLLDALQYGAPPHGGLAFGLDRIVTMMTGAESIRDVIAFPKTQRAQCLLTQAPSEVDEKQLRELHIRLRNVEPVVKG</sequence>
<proteinExistence type="inferred from homology"/>
<gene>
    <name evidence="1" type="primary">aspS</name>
    <name type="ordered locus">HEAR2844</name>
</gene>
<keyword id="KW-0030">Aminoacyl-tRNA synthetase</keyword>
<keyword id="KW-0067">ATP-binding</keyword>
<keyword id="KW-0963">Cytoplasm</keyword>
<keyword id="KW-0436">Ligase</keyword>
<keyword id="KW-0547">Nucleotide-binding</keyword>
<keyword id="KW-0648">Protein biosynthesis</keyword>
<keyword id="KW-1185">Reference proteome</keyword>
<comment type="function">
    <text evidence="1">Aspartyl-tRNA synthetase with relaxed tRNA specificity since it is able to aspartylate not only its cognate tRNA(Asp) but also tRNA(Asn). Reaction proceeds in two steps: L-aspartate is first activated by ATP to form Asp-AMP and then transferred to the acceptor end of tRNA(Asp/Asn).</text>
</comment>
<comment type="catalytic activity">
    <reaction evidence="1">
        <text>tRNA(Asx) + L-aspartate + ATP = L-aspartyl-tRNA(Asx) + AMP + diphosphate</text>
        <dbReference type="Rhea" id="RHEA:18349"/>
        <dbReference type="Rhea" id="RHEA-COMP:9710"/>
        <dbReference type="Rhea" id="RHEA-COMP:9711"/>
        <dbReference type="ChEBI" id="CHEBI:29991"/>
        <dbReference type="ChEBI" id="CHEBI:30616"/>
        <dbReference type="ChEBI" id="CHEBI:33019"/>
        <dbReference type="ChEBI" id="CHEBI:78442"/>
        <dbReference type="ChEBI" id="CHEBI:78516"/>
        <dbReference type="ChEBI" id="CHEBI:456215"/>
        <dbReference type="EC" id="6.1.1.23"/>
    </reaction>
</comment>
<comment type="subunit">
    <text evidence="1">Homodimer.</text>
</comment>
<comment type="subcellular location">
    <subcellularLocation>
        <location evidence="1">Cytoplasm</location>
    </subcellularLocation>
</comment>
<comment type="similarity">
    <text evidence="1">Belongs to the class-II aminoacyl-tRNA synthetase family. Type 1 subfamily.</text>
</comment>